<gene>
    <name evidence="1" type="primary">acpS</name>
    <name type="ordered locus">Smed_0680</name>
</gene>
<accession>A6U7A6</accession>
<organism>
    <name type="scientific">Sinorhizobium medicae (strain WSM419)</name>
    <name type="common">Ensifer medicae</name>
    <dbReference type="NCBI Taxonomy" id="366394"/>
    <lineage>
        <taxon>Bacteria</taxon>
        <taxon>Pseudomonadati</taxon>
        <taxon>Pseudomonadota</taxon>
        <taxon>Alphaproteobacteria</taxon>
        <taxon>Hyphomicrobiales</taxon>
        <taxon>Rhizobiaceae</taxon>
        <taxon>Sinorhizobium/Ensifer group</taxon>
        <taxon>Sinorhizobium</taxon>
    </lineage>
</organism>
<dbReference type="EC" id="2.7.8.7" evidence="1"/>
<dbReference type="EMBL" id="CP000738">
    <property type="protein sequence ID" value="ABR59536.1"/>
    <property type="molecule type" value="Genomic_DNA"/>
</dbReference>
<dbReference type="RefSeq" id="WP_011974882.1">
    <property type="nucleotide sequence ID" value="NC_009636.1"/>
</dbReference>
<dbReference type="RefSeq" id="YP_001326371.1">
    <property type="nucleotide sequence ID" value="NC_009636.1"/>
</dbReference>
<dbReference type="SMR" id="A6U7A6"/>
<dbReference type="STRING" id="366394.Smed_0680"/>
<dbReference type="GeneID" id="61609956"/>
<dbReference type="KEGG" id="smd:Smed_0680"/>
<dbReference type="PATRIC" id="fig|366394.8.peg.3782"/>
<dbReference type="eggNOG" id="COG0736">
    <property type="taxonomic scope" value="Bacteria"/>
</dbReference>
<dbReference type="HOGENOM" id="CLU_089696_0_2_5"/>
<dbReference type="OrthoDB" id="517356at2"/>
<dbReference type="Proteomes" id="UP000001108">
    <property type="component" value="Chromosome"/>
</dbReference>
<dbReference type="GO" id="GO:0005737">
    <property type="term" value="C:cytoplasm"/>
    <property type="evidence" value="ECO:0007669"/>
    <property type="project" value="UniProtKB-SubCell"/>
</dbReference>
<dbReference type="GO" id="GO:0008897">
    <property type="term" value="F:holo-[acyl-carrier-protein] synthase activity"/>
    <property type="evidence" value="ECO:0007669"/>
    <property type="project" value="UniProtKB-UniRule"/>
</dbReference>
<dbReference type="GO" id="GO:0000287">
    <property type="term" value="F:magnesium ion binding"/>
    <property type="evidence" value="ECO:0007669"/>
    <property type="project" value="UniProtKB-UniRule"/>
</dbReference>
<dbReference type="GO" id="GO:0006633">
    <property type="term" value="P:fatty acid biosynthetic process"/>
    <property type="evidence" value="ECO:0007669"/>
    <property type="project" value="UniProtKB-UniRule"/>
</dbReference>
<dbReference type="Gene3D" id="3.90.470.20">
    <property type="entry name" value="4'-phosphopantetheinyl transferase domain"/>
    <property type="match status" value="1"/>
</dbReference>
<dbReference type="HAMAP" id="MF_00101">
    <property type="entry name" value="AcpS"/>
    <property type="match status" value="1"/>
</dbReference>
<dbReference type="InterPro" id="IPR008278">
    <property type="entry name" value="4-PPantetheinyl_Trfase_dom"/>
</dbReference>
<dbReference type="InterPro" id="IPR037143">
    <property type="entry name" value="4-PPantetheinyl_Trfase_dom_sf"/>
</dbReference>
<dbReference type="InterPro" id="IPR002582">
    <property type="entry name" value="ACPS"/>
</dbReference>
<dbReference type="InterPro" id="IPR004568">
    <property type="entry name" value="Ppantetheine-prot_Trfase_dom"/>
</dbReference>
<dbReference type="NCBIfam" id="TIGR00516">
    <property type="entry name" value="acpS"/>
    <property type="match status" value="1"/>
</dbReference>
<dbReference type="NCBIfam" id="TIGR00556">
    <property type="entry name" value="pantethn_trn"/>
    <property type="match status" value="1"/>
</dbReference>
<dbReference type="Pfam" id="PF01648">
    <property type="entry name" value="ACPS"/>
    <property type="match status" value="1"/>
</dbReference>
<dbReference type="SUPFAM" id="SSF56214">
    <property type="entry name" value="4'-phosphopantetheinyl transferase"/>
    <property type="match status" value="1"/>
</dbReference>
<evidence type="ECO:0000255" key="1">
    <source>
        <dbReference type="HAMAP-Rule" id="MF_00101"/>
    </source>
</evidence>
<comment type="function">
    <text evidence="1">Transfers the 4'-phosphopantetheine moiety from coenzyme A to a Ser of acyl-carrier-protein.</text>
</comment>
<comment type="catalytic activity">
    <reaction evidence="1">
        <text>apo-[ACP] + CoA = holo-[ACP] + adenosine 3',5'-bisphosphate + H(+)</text>
        <dbReference type="Rhea" id="RHEA:12068"/>
        <dbReference type="Rhea" id="RHEA-COMP:9685"/>
        <dbReference type="Rhea" id="RHEA-COMP:9690"/>
        <dbReference type="ChEBI" id="CHEBI:15378"/>
        <dbReference type="ChEBI" id="CHEBI:29999"/>
        <dbReference type="ChEBI" id="CHEBI:57287"/>
        <dbReference type="ChEBI" id="CHEBI:58343"/>
        <dbReference type="ChEBI" id="CHEBI:64479"/>
        <dbReference type="EC" id="2.7.8.7"/>
    </reaction>
</comment>
<comment type="cofactor">
    <cofactor evidence="1">
        <name>Mg(2+)</name>
        <dbReference type="ChEBI" id="CHEBI:18420"/>
    </cofactor>
</comment>
<comment type="subcellular location">
    <subcellularLocation>
        <location evidence="1">Cytoplasm</location>
    </subcellularLocation>
</comment>
<comment type="similarity">
    <text evidence="1">Belongs to the P-Pant transferase superfamily. AcpS family.</text>
</comment>
<protein>
    <recommendedName>
        <fullName evidence="1">Holo-[acyl-carrier-protein] synthase</fullName>
        <shortName evidence="1">Holo-ACP synthase</shortName>
        <ecNumber evidence="1">2.7.8.7</ecNumber>
    </recommendedName>
    <alternativeName>
        <fullName evidence="1">4'-phosphopantetheinyl transferase AcpS</fullName>
    </alternativeName>
</protein>
<name>ACPS_SINMW</name>
<sequence length="139" mass="14981">MIIGIGSDLIDIRRIENSLQRFGERFVNRCFTDIEIAKSDGRKNRAASYAKRFAAKEACSKALGTGLAQGVFWKEMGVVNLPGGKPTMQLTGGAAARLREMLPVGHRAAIHLTITDDFPLAQAFVIIEALPVAPAEGTV</sequence>
<feature type="chain" id="PRO_1000008502" description="Holo-[acyl-carrier-protein] synthase">
    <location>
        <begin position="1"/>
        <end position="139"/>
    </location>
</feature>
<feature type="binding site" evidence="1">
    <location>
        <position position="8"/>
    </location>
    <ligand>
        <name>Mg(2+)</name>
        <dbReference type="ChEBI" id="CHEBI:18420"/>
    </ligand>
</feature>
<feature type="binding site" evidence="1">
    <location>
        <position position="57"/>
    </location>
    <ligand>
        <name>Mg(2+)</name>
        <dbReference type="ChEBI" id="CHEBI:18420"/>
    </ligand>
</feature>
<reference key="1">
    <citation type="submission" date="2007-06" db="EMBL/GenBank/DDBJ databases">
        <title>Complete sequence of Sinorhizobium medicae WSM419 chromosome.</title>
        <authorList>
            <consortium name="US DOE Joint Genome Institute"/>
            <person name="Copeland A."/>
            <person name="Lucas S."/>
            <person name="Lapidus A."/>
            <person name="Barry K."/>
            <person name="Glavina del Rio T."/>
            <person name="Dalin E."/>
            <person name="Tice H."/>
            <person name="Pitluck S."/>
            <person name="Chain P."/>
            <person name="Malfatti S."/>
            <person name="Shin M."/>
            <person name="Vergez L."/>
            <person name="Schmutz J."/>
            <person name="Larimer F."/>
            <person name="Land M."/>
            <person name="Hauser L."/>
            <person name="Kyrpides N."/>
            <person name="Mikhailova N."/>
            <person name="Reeve W.G."/>
            <person name="Richardson P."/>
        </authorList>
    </citation>
    <scope>NUCLEOTIDE SEQUENCE [LARGE SCALE GENOMIC DNA]</scope>
    <source>
        <strain>WSM419</strain>
    </source>
</reference>
<keyword id="KW-0963">Cytoplasm</keyword>
<keyword id="KW-0275">Fatty acid biosynthesis</keyword>
<keyword id="KW-0276">Fatty acid metabolism</keyword>
<keyword id="KW-0444">Lipid biosynthesis</keyword>
<keyword id="KW-0443">Lipid metabolism</keyword>
<keyword id="KW-0460">Magnesium</keyword>
<keyword id="KW-0479">Metal-binding</keyword>
<keyword id="KW-0808">Transferase</keyword>
<proteinExistence type="inferred from homology"/>